<gene>
    <name evidence="1" type="primary">metJ</name>
    <name type="ordered locus">SPC_4208</name>
</gene>
<comment type="function">
    <text evidence="1">This regulatory protein, when combined with SAM (S-adenosylmethionine) represses the expression of the methionine regulon and of enzymes involved in SAM synthesis.</text>
</comment>
<comment type="subunit">
    <text evidence="1">Homodimer.</text>
</comment>
<comment type="subcellular location">
    <subcellularLocation>
        <location evidence="1">Cytoplasm</location>
    </subcellularLocation>
</comment>
<comment type="domain">
    <text>Does not bind DNA by a helix-turn-helix motif.</text>
</comment>
<comment type="similarity">
    <text evidence="1">Belongs to the MetJ family.</text>
</comment>
<keyword id="KW-0028">Amino-acid biosynthesis</keyword>
<keyword id="KW-0963">Cytoplasm</keyword>
<keyword id="KW-0238">DNA-binding</keyword>
<keyword id="KW-0486">Methionine biosynthesis</keyword>
<keyword id="KW-0678">Repressor</keyword>
<keyword id="KW-0804">Transcription</keyword>
<keyword id="KW-0805">Transcription regulation</keyword>
<proteinExistence type="inferred from homology"/>
<accession>C0Q452</accession>
<feature type="chain" id="PRO_1000148315" description="Met repressor">
    <location>
        <begin position="1"/>
        <end position="105"/>
    </location>
</feature>
<dbReference type="EMBL" id="CP000857">
    <property type="protein sequence ID" value="ACN48271.1"/>
    <property type="molecule type" value="Genomic_DNA"/>
</dbReference>
<dbReference type="RefSeq" id="WP_000852811.1">
    <property type="nucleotide sequence ID" value="NC_012125.1"/>
</dbReference>
<dbReference type="SMR" id="C0Q452"/>
<dbReference type="GeneID" id="66758351"/>
<dbReference type="KEGG" id="sei:SPC_4208"/>
<dbReference type="HOGENOM" id="CLU_142318_0_0_6"/>
<dbReference type="Proteomes" id="UP000001599">
    <property type="component" value="Chromosome"/>
</dbReference>
<dbReference type="GO" id="GO:0005737">
    <property type="term" value="C:cytoplasm"/>
    <property type="evidence" value="ECO:0007669"/>
    <property type="project" value="UniProtKB-SubCell"/>
</dbReference>
<dbReference type="GO" id="GO:0003677">
    <property type="term" value="F:DNA binding"/>
    <property type="evidence" value="ECO:0007669"/>
    <property type="project" value="UniProtKB-KW"/>
</dbReference>
<dbReference type="GO" id="GO:0003700">
    <property type="term" value="F:DNA-binding transcription factor activity"/>
    <property type="evidence" value="ECO:0007669"/>
    <property type="project" value="InterPro"/>
</dbReference>
<dbReference type="GO" id="GO:0009086">
    <property type="term" value="P:methionine biosynthetic process"/>
    <property type="evidence" value="ECO:0007669"/>
    <property type="project" value="UniProtKB-UniRule"/>
</dbReference>
<dbReference type="GO" id="GO:0045892">
    <property type="term" value="P:negative regulation of DNA-templated transcription"/>
    <property type="evidence" value="ECO:0007669"/>
    <property type="project" value="UniProtKB-UniRule"/>
</dbReference>
<dbReference type="CDD" id="cd00490">
    <property type="entry name" value="Met_repressor_MetJ"/>
    <property type="match status" value="1"/>
</dbReference>
<dbReference type="FunFam" id="1.10.140.10:FF:000001">
    <property type="entry name" value="Met repressor"/>
    <property type="match status" value="1"/>
</dbReference>
<dbReference type="Gene3D" id="1.10.140.10">
    <property type="entry name" value="MET Apo-Repressor, subunit A"/>
    <property type="match status" value="1"/>
</dbReference>
<dbReference type="HAMAP" id="MF_00744">
    <property type="entry name" value="MetJ"/>
    <property type="match status" value="1"/>
</dbReference>
<dbReference type="InterPro" id="IPR002084">
    <property type="entry name" value="Met_repressor_MetJ"/>
</dbReference>
<dbReference type="InterPro" id="IPR023453">
    <property type="entry name" value="Met_repressor_MetJ_dom_sf"/>
</dbReference>
<dbReference type="InterPro" id="IPR010985">
    <property type="entry name" value="Ribbon_hlx_hlx"/>
</dbReference>
<dbReference type="NCBIfam" id="NF003622">
    <property type="entry name" value="PRK05264.1"/>
    <property type="match status" value="1"/>
</dbReference>
<dbReference type="Pfam" id="PF01340">
    <property type="entry name" value="MetJ"/>
    <property type="match status" value="1"/>
</dbReference>
<dbReference type="SUPFAM" id="SSF47598">
    <property type="entry name" value="Ribbon-helix-helix"/>
    <property type="match status" value="1"/>
</dbReference>
<evidence type="ECO:0000255" key="1">
    <source>
        <dbReference type="HAMAP-Rule" id="MF_00744"/>
    </source>
</evidence>
<reference key="1">
    <citation type="journal article" date="2009" name="PLoS ONE">
        <title>Salmonella paratyphi C: genetic divergence from Salmonella choleraesuis and pathogenic convergence with Salmonella typhi.</title>
        <authorList>
            <person name="Liu W.-Q."/>
            <person name="Feng Y."/>
            <person name="Wang Y."/>
            <person name="Zou Q.-H."/>
            <person name="Chen F."/>
            <person name="Guo J.-T."/>
            <person name="Peng Y.-H."/>
            <person name="Jin Y."/>
            <person name="Li Y.-G."/>
            <person name="Hu S.-N."/>
            <person name="Johnston R.N."/>
            <person name="Liu G.-R."/>
            <person name="Liu S.-L."/>
        </authorList>
    </citation>
    <scope>NUCLEOTIDE SEQUENCE [LARGE SCALE GENOMIC DNA]</scope>
    <source>
        <strain>RKS4594</strain>
    </source>
</reference>
<sequence>MAEWSGEYISPYAEHGKKSEQVKKITVSIPLKVLKILTDERTRRQVNNLRHATNSELLCEAFLHAFTGQPLPDDADLRKERSDEIPEAAKEIMREMGIDPETWEY</sequence>
<organism>
    <name type="scientific">Salmonella paratyphi C (strain RKS4594)</name>
    <dbReference type="NCBI Taxonomy" id="476213"/>
    <lineage>
        <taxon>Bacteria</taxon>
        <taxon>Pseudomonadati</taxon>
        <taxon>Pseudomonadota</taxon>
        <taxon>Gammaproteobacteria</taxon>
        <taxon>Enterobacterales</taxon>
        <taxon>Enterobacteriaceae</taxon>
        <taxon>Salmonella</taxon>
    </lineage>
</organism>
<protein>
    <recommendedName>
        <fullName evidence="1">Met repressor</fullName>
    </recommendedName>
    <alternativeName>
        <fullName evidence="1">Met regulon regulatory protein MetJ</fullName>
    </alternativeName>
</protein>
<name>METJ_SALPC</name>